<protein>
    <recommendedName>
        <fullName evidence="1">Small ribosomal subunit protein uS10</fullName>
    </recommendedName>
    <alternativeName>
        <fullName evidence="2">30S ribosomal protein S10</fullName>
    </alternativeName>
</protein>
<accession>Q9A8V4</accession>
<keyword id="KW-1185">Reference proteome</keyword>
<keyword id="KW-0687">Ribonucleoprotein</keyword>
<keyword id="KW-0689">Ribosomal protein</keyword>
<sequence length="102" mass="11705">MDRQNIRIRLKAFDHRVLDHSTREIVNTAKRTGATVRGPIPLPTLIEKFTVNRSPHVDKKSREQFEIRTHKRVLDIVDPTPQTVDALMKLDLSAGVDVEIKL</sequence>
<feature type="chain" id="PRO_0000146514" description="Small ribosomal subunit protein uS10">
    <location>
        <begin position="1"/>
        <end position="102"/>
    </location>
</feature>
<organism>
    <name type="scientific">Caulobacter vibrioides (strain ATCC 19089 / CIP 103742 / CB 15)</name>
    <name type="common">Caulobacter crescentus</name>
    <dbReference type="NCBI Taxonomy" id="190650"/>
    <lineage>
        <taxon>Bacteria</taxon>
        <taxon>Pseudomonadati</taxon>
        <taxon>Pseudomonadota</taxon>
        <taxon>Alphaproteobacteria</taxon>
        <taxon>Caulobacterales</taxon>
        <taxon>Caulobacteraceae</taxon>
        <taxon>Caulobacter</taxon>
    </lineage>
</organism>
<reference key="1">
    <citation type="journal article" date="2001" name="Proc. Natl. Acad. Sci. U.S.A.">
        <title>Complete genome sequence of Caulobacter crescentus.</title>
        <authorList>
            <person name="Nierman W.C."/>
            <person name="Feldblyum T.V."/>
            <person name="Laub M.T."/>
            <person name="Paulsen I.T."/>
            <person name="Nelson K.E."/>
            <person name="Eisen J.A."/>
            <person name="Heidelberg J.F."/>
            <person name="Alley M.R.K."/>
            <person name="Ohta N."/>
            <person name="Maddock J.R."/>
            <person name="Potocka I."/>
            <person name="Nelson W.C."/>
            <person name="Newton A."/>
            <person name="Stephens C."/>
            <person name="Phadke N.D."/>
            <person name="Ely B."/>
            <person name="DeBoy R.T."/>
            <person name="Dodson R.J."/>
            <person name="Durkin A.S."/>
            <person name="Gwinn M.L."/>
            <person name="Haft D.H."/>
            <person name="Kolonay J.F."/>
            <person name="Smit J."/>
            <person name="Craven M.B."/>
            <person name="Khouri H.M."/>
            <person name="Shetty J."/>
            <person name="Berry K.J."/>
            <person name="Utterback T.R."/>
            <person name="Tran K."/>
            <person name="Wolf A.M."/>
            <person name="Vamathevan J.J."/>
            <person name="Ermolaeva M.D."/>
            <person name="White O."/>
            <person name="Salzberg S.L."/>
            <person name="Venter J.C."/>
            <person name="Shapiro L."/>
            <person name="Fraser C.M."/>
        </authorList>
    </citation>
    <scope>NUCLEOTIDE SEQUENCE [LARGE SCALE GENOMIC DNA]</scope>
    <source>
        <strain>ATCC 19089 / CIP 103742 / CB 15</strain>
    </source>
</reference>
<dbReference type="EMBL" id="AE005673">
    <property type="protein sequence ID" value="AAK23228.1"/>
    <property type="molecule type" value="Genomic_DNA"/>
</dbReference>
<dbReference type="PIR" id="H87403">
    <property type="entry name" value="H87403"/>
</dbReference>
<dbReference type="RefSeq" id="NP_420060.1">
    <property type="nucleotide sequence ID" value="NC_002696.2"/>
</dbReference>
<dbReference type="RefSeq" id="WP_004616952.1">
    <property type="nucleotide sequence ID" value="NC_002696.2"/>
</dbReference>
<dbReference type="SMR" id="Q9A8V4"/>
<dbReference type="STRING" id="190650.CC_1247"/>
<dbReference type="EnsemblBacteria" id="AAK23228">
    <property type="protein sequence ID" value="AAK23228"/>
    <property type="gene ID" value="CC_1247"/>
</dbReference>
<dbReference type="KEGG" id="ccr:CC_1247"/>
<dbReference type="PATRIC" id="fig|190650.5.peg.1272"/>
<dbReference type="eggNOG" id="COG0051">
    <property type="taxonomic scope" value="Bacteria"/>
</dbReference>
<dbReference type="HOGENOM" id="CLU_122625_1_3_5"/>
<dbReference type="BioCyc" id="CAULO:CC1247-MONOMER"/>
<dbReference type="Proteomes" id="UP000001816">
    <property type="component" value="Chromosome"/>
</dbReference>
<dbReference type="GO" id="GO:1990904">
    <property type="term" value="C:ribonucleoprotein complex"/>
    <property type="evidence" value="ECO:0007669"/>
    <property type="project" value="UniProtKB-KW"/>
</dbReference>
<dbReference type="GO" id="GO:0005840">
    <property type="term" value="C:ribosome"/>
    <property type="evidence" value="ECO:0007669"/>
    <property type="project" value="UniProtKB-KW"/>
</dbReference>
<dbReference type="GO" id="GO:0003735">
    <property type="term" value="F:structural constituent of ribosome"/>
    <property type="evidence" value="ECO:0007669"/>
    <property type="project" value="InterPro"/>
</dbReference>
<dbReference type="GO" id="GO:0000049">
    <property type="term" value="F:tRNA binding"/>
    <property type="evidence" value="ECO:0007669"/>
    <property type="project" value="UniProtKB-UniRule"/>
</dbReference>
<dbReference type="GO" id="GO:0006412">
    <property type="term" value="P:translation"/>
    <property type="evidence" value="ECO:0007669"/>
    <property type="project" value="UniProtKB-UniRule"/>
</dbReference>
<dbReference type="FunFam" id="3.30.70.600:FF:000001">
    <property type="entry name" value="30S ribosomal protein S10"/>
    <property type="match status" value="1"/>
</dbReference>
<dbReference type="Gene3D" id="3.30.70.600">
    <property type="entry name" value="Ribosomal protein S10 domain"/>
    <property type="match status" value="1"/>
</dbReference>
<dbReference type="HAMAP" id="MF_00508">
    <property type="entry name" value="Ribosomal_uS10"/>
    <property type="match status" value="1"/>
</dbReference>
<dbReference type="InterPro" id="IPR001848">
    <property type="entry name" value="Ribosomal_uS10"/>
</dbReference>
<dbReference type="InterPro" id="IPR018268">
    <property type="entry name" value="Ribosomal_uS10_CS"/>
</dbReference>
<dbReference type="InterPro" id="IPR027486">
    <property type="entry name" value="Ribosomal_uS10_dom"/>
</dbReference>
<dbReference type="InterPro" id="IPR036838">
    <property type="entry name" value="Ribosomal_uS10_dom_sf"/>
</dbReference>
<dbReference type="NCBIfam" id="NF001861">
    <property type="entry name" value="PRK00596.1"/>
    <property type="match status" value="1"/>
</dbReference>
<dbReference type="NCBIfam" id="TIGR01049">
    <property type="entry name" value="rpsJ_bact"/>
    <property type="match status" value="1"/>
</dbReference>
<dbReference type="PANTHER" id="PTHR11700">
    <property type="entry name" value="30S RIBOSOMAL PROTEIN S10 FAMILY MEMBER"/>
    <property type="match status" value="1"/>
</dbReference>
<dbReference type="Pfam" id="PF00338">
    <property type="entry name" value="Ribosomal_S10"/>
    <property type="match status" value="1"/>
</dbReference>
<dbReference type="PRINTS" id="PR00971">
    <property type="entry name" value="RIBOSOMALS10"/>
</dbReference>
<dbReference type="SMART" id="SM01403">
    <property type="entry name" value="Ribosomal_S10"/>
    <property type="match status" value="1"/>
</dbReference>
<dbReference type="SUPFAM" id="SSF54999">
    <property type="entry name" value="Ribosomal protein S10"/>
    <property type="match status" value="1"/>
</dbReference>
<dbReference type="PROSITE" id="PS00361">
    <property type="entry name" value="RIBOSOMAL_S10"/>
    <property type="match status" value="1"/>
</dbReference>
<proteinExistence type="inferred from homology"/>
<gene>
    <name evidence="1" type="primary">rpsJ</name>
    <name type="ordered locus">CC_1247</name>
</gene>
<evidence type="ECO:0000255" key="1">
    <source>
        <dbReference type="HAMAP-Rule" id="MF_00508"/>
    </source>
</evidence>
<evidence type="ECO:0000305" key="2"/>
<name>RS10_CAUVC</name>
<comment type="function">
    <text evidence="1">Involved in the binding of tRNA to the ribosomes.</text>
</comment>
<comment type="subunit">
    <text evidence="1">Part of the 30S ribosomal subunit.</text>
</comment>
<comment type="similarity">
    <text evidence="1">Belongs to the universal ribosomal protein uS10 family.</text>
</comment>